<keyword id="KW-1043">Host membrane</keyword>
<keyword id="KW-1045">Host mitochondrion</keyword>
<keyword id="KW-0945">Host-virus interaction</keyword>
<keyword id="KW-0472">Membrane</keyword>
<keyword id="KW-1119">Modulation of host cell apoptosis by virus</keyword>
<keyword id="KW-1185">Reference proteome</keyword>
<keyword id="KW-0812">Transmembrane</keyword>
<keyword id="KW-1133">Transmembrane helix</keyword>
<organism>
    <name type="scientific">Myxoma virus (strain Lausanne)</name>
    <name type="common">MYXV</name>
    <dbReference type="NCBI Taxonomy" id="31530"/>
    <lineage>
        <taxon>Viruses</taxon>
        <taxon>Varidnaviria</taxon>
        <taxon>Bamfordvirae</taxon>
        <taxon>Nucleocytoviricota</taxon>
        <taxon>Pokkesviricetes</taxon>
        <taxon>Chitovirales</taxon>
        <taxon>Poxviridae</taxon>
        <taxon>Chordopoxvirinae</taxon>
        <taxon>Leporipoxvirus</taxon>
        <taxon>Myxoma virus</taxon>
    </lineage>
</organism>
<feature type="chain" id="PRO_0000443229" description="Apoptosis regulator M11L">
    <location>
        <begin position="1"/>
        <end position="166"/>
    </location>
</feature>
<feature type="transmembrane region" description="Helical" evidence="1">
    <location>
        <begin position="138"/>
        <end position="160"/>
    </location>
</feature>
<accession>Q77PA8</accession>
<dbReference type="EMBL" id="AF170726">
    <property type="protein sequence ID" value="AAF14899.1"/>
    <property type="molecule type" value="Genomic_DNA"/>
</dbReference>
<dbReference type="PIR" id="A44058">
    <property type="entry name" value="A44058"/>
</dbReference>
<dbReference type="RefSeq" id="NP_051725.1">
    <property type="nucleotide sequence ID" value="NC_001132.2"/>
</dbReference>
<dbReference type="SMR" id="Q77PA8"/>
<dbReference type="GeneID" id="932150"/>
<dbReference type="KEGG" id="vg:932150"/>
<dbReference type="Proteomes" id="UP000000867">
    <property type="component" value="Segment"/>
</dbReference>
<dbReference type="GO" id="GO:0033644">
    <property type="term" value="C:host cell membrane"/>
    <property type="evidence" value="ECO:0007669"/>
    <property type="project" value="UniProtKB-SubCell"/>
</dbReference>
<dbReference type="GO" id="GO:0033650">
    <property type="term" value="C:host cell mitochondrion"/>
    <property type="evidence" value="ECO:0007669"/>
    <property type="project" value="UniProtKB-SubCell"/>
</dbReference>
<dbReference type="GO" id="GO:0016020">
    <property type="term" value="C:membrane"/>
    <property type="evidence" value="ECO:0007669"/>
    <property type="project" value="UniProtKB-KW"/>
</dbReference>
<dbReference type="GO" id="GO:0042981">
    <property type="term" value="P:regulation of apoptotic process"/>
    <property type="evidence" value="ECO:0007669"/>
    <property type="project" value="InterPro"/>
</dbReference>
<dbReference type="GO" id="GO:0033668">
    <property type="term" value="P:symbiont-mediated suppression of host apoptosis"/>
    <property type="evidence" value="ECO:0007669"/>
    <property type="project" value="InterPro"/>
</dbReference>
<dbReference type="Gene3D" id="1.10.437.10">
    <property type="entry name" value="Blc2-like"/>
    <property type="match status" value="1"/>
</dbReference>
<dbReference type="InterPro" id="IPR036834">
    <property type="entry name" value="Bcl-2-like_sf"/>
</dbReference>
<dbReference type="InterPro" id="IPR021119">
    <property type="entry name" value="Poxvirus_F1/C10"/>
</dbReference>
<dbReference type="Pfam" id="PF11099">
    <property type="entry name" value="M11L"/>
    <property type="match status" value="1"/>
</dbReference>
<protein>
    <recommendedName>
        <fullName>Apoptosis regulator M11L</fullName>
    </recommendedName>
</protein>
<evidence type="ECO:0000255" key="1"/>
<evidence type="ECO:0000269" key="2">
    <source>
    </source>
</evidence>
<evidence type="ECO:0000269" key="3">
    <source>
    </source>
</evidence>
<organismHost>
    <name type="scientific">Oryctolagus cuniculus</name>
    <name type="common">Rabbit</name>
    <dbReference type="NCBI Taxonomy" id="9986"/>
</organismHost>
<gene>
    <name type="primary">m011L</name>
</gene>
<reference key="1">
    <citation type="journal article" date="1999" name="Virology">
        <title>The complete DNA sequence of myxoma virus.</title>
        <authorList>
            <person name="Cameron C."/>
            <person name="Hota-Mitchell S."/>
            <person name="Chen L."/>
            <person name="Barrett J.W."/>
            <person name="Cao J.-X."/>
            <person name="Macaulay C."/>
            <person name="Willer D.O."/>
            <person name="Evans D.H."/>
            <person name="McFadden G."/>
        </authorList>
    </citation>
    <scope>NUCLEOTIDE SEQUENCE [LARGE SCALE GENOMIC DNA]</scope>
</reference>
<reference key="2">
    <citation type="journal article" date="2005" name="Immunity">
        <title>A poxvirus-encoded pyrin domain protein interacts with ASC-1 to inhibit host inflammatory and apoptotic responses to infection.</title>
        <authorList>
            <person name="Johnston J.B."/>
            <person name="Barrett J.W."/>
            <person name="Nazarian S.H."/>
            <person name="Goodwin M."/>
            <person name="Ricuttio D."/>
            <person name="Wang G."/>
            <person name="McFadden G."/>
        </authorList>
    </citation>
    <scope>NUCLEOTIDE SEQUENCE [LARGE SCALE GENOMIC DNA]</scope>
</reference>
<reference key="3">
    <citation type="journal article" date="2004" name="J. Virol.">
        <title>Myxoma virus M11L prevents apoptosis through constitutive interaction with Bak.</title>
        <authorList>
            <person name="Wang G."/>
            <person name="Barrett J.W."/>
            <person name="Nazarian S.H."/>
            <person name="Everett H."/>
            <person name="Gao X."/>
            <person name="Bleackley C."/>
            <person name="Colwill K."/>
            <person name="Moran M.F."/>
            <person name="McFadden G."/>
        </authorList>
    </citation>
    <scope>FUNCTION</scope>
    <scope>INTERACTION WITH HOST BAK1</scope>
</reference>
<reference key="4">
    <citation type="journal article" date="2006" name="J. Virol.">
        <title>Myxoma virus M11L blocks apoptosis through inhibition of conformational activation of Bax at the mitochondria.</title>
        <authorList>
            <person name="Su J."/>
            <person name="Wang G."/>
            <person name="Barrett J.W."/>
            <person name="Irvine T.S."/>
            <person name="Gao X."/>
            <person name="McFadden G."/>
        </authorList>
    </citation>
    <scope>FUNCTION</scope>
    <scope>INTERACTION WITH HOST BAX</scope>
    <scope>SUBCELLULAR LOCATION</scope>
</reference>
<sequence length="166" mass="18813">MMSRLKTAVYDYLNDVDITECTEMDLLCQLSNCCDFINETYAKNYDTLYDIMERDILSYNIVNIKNTLTFALRDASPSVKLATLTLLASVIKKLNKIQHTDAAMFSEVIDGIVAEEQQVIGFIQKKCKYNTTYYNVRSGGCKISVYLTAAVVGFVAYGILKWYRGT</sequence>
<proteinExistence type="evidence at protein level"/>
<comment type="function">
    <text evidence="2 3">Plays a role in the inhibition of mitochondria-mediated apoptosis by blocking the activation of mitochondria-tranlocalized BAX thereby maintaining pro-apoptotic BAX in an inactive conformation. Also inhibits apoptosis in a BAX-independent manner by interacting with and inhibiting host BAK1 (PubMed:15194786).</text>
</comment>
<comment type="subunit">
    <text evidence="2 3">Interacts with host BAX; this interaction inhibits apoptosis activation (PubMed:16414991). Interacts with host BAK1 (PubMed:15194786).</text>
</comment>
<comment type="subcellular location">
    <subcellularLocation>
        <location evidence="3">Host mitochondrion</location>
    </subcellularLocation>
    <subcellularLocation>
        <location evidence="1">Host membrane</location>
        <topology evidence="1">Single-pass membrane protein</topology>
    </subcellularLocation>
</comment>
<name>M11L_MYXVL</name>